<reference key="1">
    <citation type="journal article" date="2008" name="Genome Res.">
        <title>Comparative genome analysis of Salmonella enteritidis PT4 and Salmonella gallinarum 287/91 provides insights into evolutionary and host adaptation pathways.</title>
        <authorList>
            <person name="Thomson N.R."/>
            <person name="Clayton D.J."/>
            <person name="Windhorst D."/>
            <person name="Vernikos G."/>
            <person name="Davidson S."/>
            <person name="Churcher C."/>
            <person name="Quail M.A."/>
            <person name="Stevens M."/>
            <person name="Jones M.A."/>
            <person name="Watson M."/>
            <person name="Barron A."/>
            <person name="Layton A."/>
            <person name="Pickard D."/>
            <person name="Kingsley R.A."/>
            <person name="Bignell A."/>
            <person name="Clark L."/>
            <person name="Harris B."/>
            <person name="Ormond D."/>
            <person name="Abdellah Z."/>
            <person name="Brooks K."/>
            <person name="Cherevach I."/>
            <person name="Chillingworth T."/>
            <person name="Woodward J."/>
            <person name="Norberczak H."/>
            <person name="Lord A."/>
            <person name="Arrowsmith C."/>
            <person name="Jagels K."/>
            <person name="Moule S."/>
            <person name="Mungall K."/>
            <person name="Saunders M."/>
            <person name="Whitehead S."/>
            <person name="Chabalgoity J.A."/>
            <person name="Maskell D."/>
            <person name="Humphreys T."/>
            <person name="Roberts M."/>
            <person name="Barrow P.A."/>
            <person name="Dougan G."/>
            <person name="Parkhill J."/>
        </authorList>
    </citation>
    <scope>NUCLEOTIDE SEQUENCE [LARGE SCALE GENOMIC DNA]</scope>
    <source>
        <strain>287/91 / NCTC 13346</strain>
    </source>
</reference>
<name>NFUA_SALG2</name>
<gene>
    <name evidence="1" type="primary">nfuA</name>
    <name type="ordered locus">SG3927</name>
</gene>
<accession>B5R7K3</accession>
<proteinExistence type="inferred from homology"/>
<keyword id="KW-0004">4Fe-4S</keyword>
<keyword id="KW-0408">Iron</keyword>
<keyword id="KW-0411">Iron-sulfur</keyword>
<keyword id="KW-0479">Metal-binding</keyword>
<sequence>MIRISDAAQAHFAKLLANQEEGTQIRVFVINPGTPNAECGVSYCPPDAVEATDTALKFDLLTAYVDELSAPYLEDAEIDFVTDQLGSQLTLKAPNAKMRKVADDAPLMERVEYALQSQINPQLAGHGGRVSLMEITDEGYAILQFGGGCNGCSMVDVTLKEGIEKQLLNEFPELKGVRDLTEHQRGEHSYY</sequence>
<comment type="function">
    <text evidence="1">Involved in iron-sulfur cluster biogenesis. Binds a 4Fe-4S cluster, can transfer this cluster to apoproteins, and thereby intervenes in the maturation of Fe/S proteins. Could also act as a scaffold/chaperone for damaged Fe/S proteins.</text>
</comment>
<comment type="cofactor">
    <cofactor evidence="1">
        <name>[4Fe-4S] cluster</name>
        <dbReference type="ChEBI" id="CHEBI:49883"/>
    </cofactor>
    <text evidence="1">Binds 1 [4Fe-4S] cluster per subunit. The cluster is presumably bound at the interface of two monomers.</text>
</comment>
<comment type="subunit">
    <text evidence="1">Homodimer.</text>
</comment>
<comment type="similarity">
    <text evidence="1">Belongs to the NfuA family.</text>
</comment>
<dbReference type="EMBL" id="AM933173">
    <property type="protein sequence ID" value="CAR39700.1"/>
    <property type="molecule type" value="Genomic_DNA"/>
</dbReference>
<dbReference type="RefSeq" id="WP_000619387.1">
    <property type="nucleotide sequence ID" value="NC_011274.1"/>
</dbReference>
<dbReference type="SMR" id="B5R7K3"/>
<dbReference type="GeneID" id="66757844"/>
<dbReference type="KEGG" id="seg:SG3927"/>
<dbReference type="HOGENOM" id="CLU_094569_0_0_6"/>
<dbReference type="Proteomes" id="UP000008321">
    <property type="component" value="Chromosome"/>
</dbReference>
<dbReference type="GO" id="GO:0051539">
    <property type="term" value="F:4 iron, 4 sulfur cluster binding"/>
    <property type="evidence" value="ECO:0007669"/>
    <property type="project" value="UniProtKB-UniRule"/>
</dbReference>
<dbReference type="GO" id="GO:0005506">
    <property type="term" value="F:iron ion binding"/>
    <property type="evidence" value="ECO:0007669"/>
    <property type="project" value="InterPro"/>
</dbReference>
<dbReference type="GO" id="GO:0016226">
    <property type="term" value="P:iron-sulfur cluster assembly"/>
    <property type="evidence" value="ECO:0007669"/>
    <property type="project" value="UniProtKB-UniRule"/>
</dbReference>
<dbReference type="GO" id="GO:0051604">
    <property type="term" value="P:protein maturation"/>
    <property type="evidence" value="ECO:0007669"/>
    <property type="project" value="UniProtKB-UniRule"/>
</dbReference>
<dbReference type="FunFam" id="2.60.300.12:FF:000004">
    <property type="entry name" value="Fe/S biogenesis protein NfuA"/>
    <property type="match status" value="1"/>
</dbReference>
<dbReference type="FunFam" id="3.30.300.130:FF:000002">
    <property type="entry name" value="Fe/S biogenesis protein NfuA"/>
    <property type="match status" value="1"/>
</dbReference>
<dbReference type="Gene3D" id="3.30.300.130">
    <property type="entry name" value="Fe-S cluster assembly (FSCA)"/>
    <property type="match status" value="1"/>
</dbReference>
<dbReference type="Gene3D" id="2.60.300.12">
    <property type="entry name" value="HesB-like domain"/>
    <property type="match status" value="1"/>
</dbReference>
<dbReference type="HAMAP" id="MF_01637">
    <property type="entry name" value="Fe_S_biogen_NfuA"/>
    <property type="match status" value="1"/>
</dbReference>
<dbReference type="InterPro" id="IPR017726">
    <property type="entry name" value="Fe/S_biogenesis_protein_NfuA"/>
</dbReference>
<dbReference type="InterPro" id="IPR000361">
    <property type="entry name" value="FeS_biogenesis"/>
</dbReference>
<dbReference type="InterPro" id="IPR034904">
    <property type="entry name" value="FSCA_dom_sf"/>
</dbReference>
<dbReference type="InterPro" id="IPR035903">
    <property type="entry name" value="HesB-like_dom_sf"/>
</dbReference>
<dbReference type="InterPro" id="IPR001075">
    <property type="entry name" value="NIF_FeS_clus_asmbl_NifU_C"/>
</dbReference>
<dbReference type="NCBIfam" id="NF008392">
    <property type="entry name" value="PRK11190.1"/>
    <property type="match status" value="1"/>
</dbReference>
<dbReference type="NCBIfam" id="TIGR03341">
    <property type="entry name" value="YhgI_GntY"/>
    <property type="match status" value="1"/>
</dbReference>
<dbReference type="PANTHER" id="PTHR11178:SF51">
    <property type="entry name" value="FE_S BIOGENESIS PROTEIN NFUA"/>
    <property type="match status" value="1"/>
</dbReference>
<dbReference type="PANTHER" id="PTHR11178">
    <property type="entry name" value="IRON-SULFUR CLUSTER SCAFFOLD PROTEIN NFU-RELATED"/>
    <property type="match status" value="1"/>
</dbReference>
<dbReference type="Pfam" id="PF01521">
    <property type="entry name" value="Fe-S_biosyn"/>
    <property type="match status" value="1"/>
</dbReference>
<dbReference type="Pfam" id="PF01106">
    <property type="entry name" value="NifU"/>
    <property type="match status" value="1"/>
</dbReference>
<dbReference type="SUPFAM" id="SSF117916">
    <property type="entry name" value="Fe-S cluster assembly (FSCA) domain-like"/>
    <property type="match status" value="1"/>
</dbReference>
<dbReference type="SUPFAM" id="SSF89360">
    <property type="entry name" value="HesB-like domain"/>
    <property type="match status" value="1"/>
</dbReference>
<organism>
    <name type="scientific">Salmonella gallinarum (strain 287/91 / NCTC 13346)</name>
    <dbReference type="NCBI Taxonomy" id="550538"/>
    <lineage>
        <taxon>Bacteria</taxon>
        <taxon>Pseudomonadati</taxon>
        <taxon>Pseudomonadota</taxon>
        <taxon>Gammaproteobacteria</taxon>
        <taxon>Enterobacterales</taxon>
        <taxon>Enterobacteriaceae</taxon>
        <taxon>Salmonella</taxon>
    </lineage>
</organism>
<protein>
    <recommendedName>
        <fullName evidence="1">Fe/S biogenesis protein NfuA</fullName>
    </recommendedName>
</protein>
<feature type="chain" id="PRO_1000186773" description="Fe/S biogenesis protein NfuA">
    <location>
        <begin position="1"/>
        <end position="191"/>
    </location>
</feature>
<feature type="binding site" evidence="1">
    <location>
        <position position="149"/>
    </location>
    <ligand>
        <name>[4Fe-4S] cluster</name>
        <dbReference type="ChEBI" id="CHEBI:49883"/>
    </ligand>
</feature>
<feature type="binding site" evidence="1">
    <location>
        <position position="152"/>
    </location>
    <ligand>
        <name>[4Fe-4S] cluster</name>
        <dbReference type="ChEBI" id="CHEBI:49883"/>
    </ligand>
</feature>
<evidence type="ECO:0000255" key="1">
    <source>
        <dbReference type="HAMAP-Rule" id="MF_01637"/>
    </source>
</evidence>